<gene>
    <name evidence="1" type="primary">thrS</name>
    <name type="ordered locus">TT_C1516</name>
</gene>
<proteinExistence type="inferred from homology"/>
<name>SYT_THET2</name>
<organism>
    <name type="scientific">Thermus thermophilus (strain ATCC BAA-163 / DSM 7039 / HB27)</name>
    <dbReference type="NCBI Taxonomy" id="262724"/>
    <lineage>
        <taxon>Bacteria</taxon>
        <taxon>Thermotogati</taxon>
        <taxon>Deinococcota</taxon>
        <taxon>Deinococci</taxon>
        <taxon>Thermales</taxon>
        <taxon>Thermaceae</taxon>
        <taxon>Thermus</taxon>
    </lineage>
</organism>
<sequence length="659" mass="75497">MTVYLPDGKPLELPEGATAKDVARALGEGWERRAVGAIVDGELYDLLKPLPQGAKVRLLTEKDPEFQTLFRHTLAHVLAQAVKEFFREKGYDPESVRLGVGPVIEKGFYYDIEAPEPLSDEDLPAIEAKMREILKRDLPLRRFVLSREEALARYRGKDPYKTELILEIPEGEEISFYQQGDEAYGFTDLCRGPHVPSTGRIPPHFKLTHVAGAYWRGDENRPMLQRVYGVAFRTAEELKEYLWQLEEAKKRDHRRLGRELELFLIDPMVGKGLVLWLPKGNVVREELMAFMREEQVRRGYQLVTTPHIGSLELYKTSGHYPYYAESQFPPISFKERGEEEEYLLKPMNCPHHIRIYAYRKRSYRELPLRLAEFGTVYRYEKAGELLGLTRVRGFTQDDAHIFCTPEEVKGEFLGVLDLVLKVFATLGLKDYRARIGVRDPKSDKYVGDEAKWALAERQIEEAAAEAGLRYTVEEGDAAFYGPKLDFVVKDALGREWQLGTIQVDYNLPERFGLTYVGKDGEEHRPVMLHRAPFGSLERFIGILIEHFAGDFPLWLAPVQAVVVPVSEKQEGYAREVAGRLKEAGLRAEADTRPERMQARIRDAEVQKVPYVLVVGEREKAEGAVSVRRRKKGNLGTMPLAAFLEGALREYRERRLEPVF</sequence>
<keyword id="KW-0030">Aminoacyl-tRNA synthetase</keyword>
<keyword id="KW-0067">ATP-binding</keyword>
<keyword id="KW-0963">Cytoplasm</keyword>
<keyword id="KW-0436">Ligase</keyword>
<keyword id="KW-0479">Metal-binding</keyword>
<keyword id="KW-0547">Nucleotide-binding</keyword>
<keyword id="KW-0648">Protein biosynthesis</keyword>
<keyword id="KW-0694">RNA-binding</keyword>
<keyword id="KW-0820">tRNA-binding</keyword>
<keyword id="KW-0862">Zinc</keyword>
<protein>
    <recommendedName>
        <fullName evidence="1">Threonine--tRNA ligase</fullName>
        <ecNumber evidence="1">6.1.1.3</ecNumber>
    </recommendedName>
    <alternativeName>
        <fullName evidence="1">Threonyl-tRNA synthetase</fullName>
        <shortName evidence="1">ThrRS</shortName>
    </alternativeName>
</protein>
<feature type="chain" id="PRO_0000101074" description="Threonine--tRNA ligase">
    <location>
        <begin position="1"/>
        <end position="659"/>
    </location>
</feature>
<feature type="domain" description="TGS" evidence="2">
    <location>
        <begin position="1"/>
        <end position="60"/>
    </location>
</feature>
<feature type="region of interest" description="Catalytic" evidence="1">
    <location>
        <begin position="252"/>
        <end position="552"/>
    </location>
</feature>
<feature type="binding site" evidence="1">
    <location>
        <position position="349"/>
    </location>
    <ligand>
        <name>Zn(2+)</name>
        <dbReference type="ChEBI" id="CHEBI:29105"/>
    </ligand>
</feature>
<feature type="binding site" evidence="1">
    <location>
        <position position="400"/>
    </location>
    <ligand>
        <name>Zn(2+)</name>
        <dbReference type="ChEBI" id="CHEBI:29105"/>
    </ligand>
</feature>
<feature type="binding site" evidence="1">
    <location>
        <position position="529"/>
    </location>
    <ligand>
        <name>Zn(2+)</name>
        <dbReference type="ChEBI" id="CHEBI:29105"/>
    </ligand>
</feature>
<evidence type="ECO:0000255" key="1">
    <source>
        <dbReference type="HAMAP-Rule" id="MF_00184"/>
    </source>
</evidence>
<evidence type="ECO:0000255" key="2">
    <source>
        <dbReference type="PROSITE-ProRule" id="PRU01228"/>
    </source>
</evidence>
<comment type="function">
    <text evidence="1">Catalyzes the attachment of threonine to tRNA(Thr) in a two-step reaction: L-threonine is first activated by ATP to form Thr-AMP and then transferred to the acceptor end of tRNA(Thr). Also edits incorrectly charged L-seryl-tRNA(Thr).</text>
</comment>
<comment type="catalytic activity">
    <reaction evidence="1">
        <text>tRNA(Thr) + L-threonine + ATP = L-threonyl-tRNA(Thr) + AMP + diphosphate + H(+)</text>
        <dbReference type="Rhea" id="RHEA:24624"/>
        <dbReference type="Rhea" id="RHEA-COMP:9670"/>
        <dbReference type="Rhea" id="RHEA-COMP:9704"/>
        <dbReference type="ChEBI" id="CHEBI:15378"/>
        <dbReference type="ChEBI" id="CHEBI:30616"/>
        <dbReference type="ChEBI" id="CHEBI:33019"/>
        <dbReference type="ChEBI" id="CHEBI:57926"/>
        <dbReference type="ChEBI" id="CHEBI:78442"/>
        <dbReference type="ChEBI" id="CHEBI:78534"/>
        <dbReference type="ChEBI" id="CHEBI:456215"/>
        <dbReference type="EC" id="6.1.1.3"/>
    </reaction>
</comment>
<comment type="cofactor">
    <cofactor evidence="1">
        <name>Zn(2+)</name>
        <dbReference type="ChEBI" id="CHEBI:29105"/>
    </cofactor>
    <text evidence="1">Binds 1 zinc ion per subunit.</text>
</comment>
<comment type="subunit">
    <text evidence="1">Homodimer.</text>
</comment>
<comment type="subcellular location">
    <subcellularLocation>
        <location evidence="1">Cytoplasm</location>
    </subcellularLocation>
</comment>
<comment type="similarity">
    <text evidence="1">Belongs to the class-II aminoacyl-tRNA synthetase family.</text>
</comment>
<accession>Q72HH1</accession>
<dbReference type="EC" id="6.1.1.3" evidence="1"/>
<dbReference type="EMBL" id="AE017221">
    <property type="protein sequence ID" value="AAS81858.1"/>
    <property type="molecule type" value="Genomic_DNA"/>
</dbReference>
<dbReference type="RefSeq" id="WP_011173890.1">
    <property type="nucleotide sequence ID" value="NC_005835.1"/>
</dbReference>
<dbReference type="SMR" id="Q72HH1"/>
<dbReference type="KEGG" id="tth:TT_C1516"/>
<dbReference type="eggNOG" id="COG0441">
    <property type="taxonomic scope" value="Bacteria"/>
</dbReference>
<dbReference type="HOGENOM" id="CLU_008554_0_1_0"/>
<dbReference type="OrthoDB" id="9802304at2"/>
<dbReference type="Proteomes" id="UP000000592">
    <property type="component" value="Chromosome"/>
</dbReference>
<dbReference type="GO" id="GO:0005737">
    <property type="term" value="C:cytoplasm"/>
    <property type="evidence" value="ECO:0007669"/>
    <property type="project" value="UniProtKB-SubCell"/>
</dbReference>
<dbReference type="GO" id="GO:0005524">
    <property type="term" value="F:ATP binding"/>
    <property type="evidence" value="ECO:0007669"/>
    <property type="project" value="UniProtKB-UniRule"/>
</dbReference>
<dbReference type="GO" id="GO:0046872">
    <property type="term" value="F:metal ion binding"/>
    <property type="evidence" value="ECO:0007669"/>
    <property type="project" value="UniProtKB-KW"/>
</dbReference>
<dbReference type="GO" id="GO:0004829">
    <property type="term" value="F:threonine-tRNA ligase activity"/>
    <property type="evidence" value="ECO:0007669"/>
    <property type="project" value="UniProtKB-UniRule"/>
</dbReference>
<dbReference type="GO" id="GO:0000049">
    <property type="term" value="F:tRNA binding"/>
    <property type="evidence" value="ECO:0007669"/>
    <property type="project" value="UniProtKB-KW"/>
</dbReference>
<dbReference type="GO" id="GO:0006435">
    <property type="term" value="P:threonyl-tRNA aminoacylation"/>
    <property type="evidence" value="ECO:0007669"/>
    <property type="project" value="UniProtKB-UniRule"/>
</dbReference>
<dbReference type="CDD" id="cd01667">
    <property type="entry name" value="TGS_ThrRS"/>
    <property type="match status" value="1"/>
</dbReference>
<dbReference type="CDD" id="cd00860">
    <property type="entry name" value="ThrRS_anticodon"/>
    <property type="match status" value="1"/>
</dbReference>
<dbReference type="CDD" id="cd00771">
    <property type="entry name" value="ThrRS_core"/>
    <property type="match status" value="1"/>
</dbReference>
<dbReference type="FunFam" id="3.30.930.10:FF:000002">
    <property type="entry name" value="Threonine--tRNA ligase"/>
    <property type="match status" value="1"/>
</dbReference>
<dbReference type="FunFam" id="3.40.50.800:FF:000001">
    <property type="entry name" value="Threonine--tRNA ligase"/>
    <property type="match status" value="1"/>
</dbReference>
<dbReference type="FunFam" id="3.30.980.10:FF:000005">
    <property type="entry name" value="Threonyl-tRNA synthetase, mitochondrial"/>
    <property type="match status" value="1"/>
</dbReference>
<dbReference type="Gene3D" id="3.10.20.30">
    <property type="match status" value="1"/>
</dbReference>
<dbReference type="Gene3D" id="3.30.54.20">
    <property type="match status" value="1"/>
</dbReference>
<dbReference type="Gene3D" id="3.40.50.800">
    <property type="entry name" value="Anticodon-binding domain"/>
    <property type="match status" value="1"/>
</dbReference>
<dbReference type="Gene3D" id="3.30.930.10">
    <property type="entry name" value="Bira Bifunctional Protein, Domain 2"/>
    <property type="match status" value="1"/>
</dbReference>
<dbReference type="Gene3D" id="3.30.980.10">
    <property type="entry name" value="Threonyl-trna Synthetase, Chain A, domain 2"/>
    <property type="match status" value="1"/>
</dbReference>
<dbReference type="HAMAP" id="MF_00184">
    <property type="entry name" value="Thr_tRNA_synth"/>
    <property type="match status" value="1"/>
</dbReference>
<dbReference type="InterPro" id="IPR002314">
    <property type="entry name" value="aa-tRNA-synt_IIb"/>
</dbReference>
<dbReference type="InterPro" id="IPR006195">
    <property type="entry name" value="aa-tRNA-synth_II"/>
</dbReference>
<dbReference type="InterPro" id="IPR045864">
    <property type="entry name" value="aa-tRNA-synth_II/BPL/LPL"/>
</dbReference>
<dbReference type="InterPro" id="IPR004154">
    <property type="entry name" value="Anticodon-bd"/>
</dbReference>
<dbReference type="InterPro" id="IPR036621">
    <property type="entry name" value="Anticodon-bd_dom_sf"/>
</dbReference>
<dbReference type="InterPro" id="IPR012675">
    <property type="entry name" value="Beta-grasp_dom_sf"/>
</dbReference>
<dbReference type="InterPro" id="IPR004095">
    <property type="entry name" value="TGS"/>
</dbReference>
<dbReference type="InterPro" id="IPR012676">
    <property type="entry name" value="TGS-like"/>
</dbReference>
<dbReference type="InterPro" id="IPR002320">
    <property type="entry name" value="Thr-tRNA-ligase_IIa"/>
</dbReference>
<dbReference type="InterPro" id="IPR018163">
    <property type="entry name" value="Thr/Ala-tRNA-synth_IIc_edit"/>
</dbReference>
<dbReference type="InterPro" id="IPR047246">
    <property type="entry name" value="ThrRS_anticodon"/>
</dbReference>
<dbReference type="InterPro" id="IPR033728">
    <property type="entry name" value="ThrRS_core"/>
</dbReference>
<dbReference type="InterPro" id="IPR012947">
    <property type="entry name" value="tRNA_SAD"/>
</dbReference>
<dbReference type="NCBIfam" id="TIGR00418">
    <property type="entry name" value="thrS"/>
    <property type="match status" value="1"/>
</dbReference>
<dbReference type="PANTHER" id="PTHR11451:SF44">
    <property type="entry name" value="THREONINE--TRNA LIGASE, CHLOROPLASTIC_MITOCHONDRIAL 2"/>
    <property type="match status" value="1"/>
</dbReference>
<dbReference type="PANTHER" id="PTHR11451">
    <property type="entry name" value="THREONINE-TRNA LIGASE"/>
    <property type="match status" value="1"/>
</dbReference>
<dbReference type="Pfam" id="PF03129">
    <property type="entry name" value="HGTP_anticodon"/>
    <property type="match status" value="1"/>
</dbReference>
<dbReference type="Pfam" id="PF02824">
    <property type="entry name" value="TGS"/>
    <property type="match status" value="1"/>
</dbReference>
<dbReference type="Pfam" id="PF00587">
    <property type="entry name" value="tRNA-synt_2b"/>
    <property type="match status" value="1"/>
</dbReference>
<dbReference type="Pfam" id="PF07973">
    <property type="entry name" value="tRNA_SAD"/>
    <property type="match status" value="1"/>
</dbReference>
<dbReference type="PRINTS" id="PR01047">
    <property type="entry name" value="TRNASYNTHTHR"/>
</dbReference>
<dbReference type="SMART" id="SM00863">
    <property type="entry name" value="tRNA_SAD"/>
    <property type="match status" value="1"/>
</dbReference>
<dbReference type="SUPFAM" id="SSF52954">
    <property type="entry name" value="Class II aaRS ABD-related"/>
    <property type="match status" value="1"/>
</dbReference>
<dbReference type="SUPFAM" id="SSF55681">
    <property type="entry name" value="Class II aaRS and biotin synthetases"/>
    <property type="match status" value="1"/>
</dbReference>
<dbReference type="SUPFAM" id="SSF81271">
    <property type="entry name" value="TGS-like"/>
    <property type="match status" value="1"/>
</dbReference>
<dbReference type="SUPFAM" id="SSF55186">
    <property type="entry name" value="ThrRS/AlaRS common domain"/>
    <property type="match status" value="1"/>
</dbReference>
<dbReference type="PROSITE" id="PS50862">
    <property type="entry name" value="AA_TRNA_LIGASE_II"/>
    <property type="match status" value="1"/>
</dbReference>
<dbReference type="PROSITE" id="PS51880">
    <property type="entry name" value="TGS"/>
    <property type="match status" value="1"/>
</dbReference>
<reference key="1">
    <citation type="journal article" date="2004" name="Nat. Biotechnol.">
        <title>The genome sequence of the extreme thermophile Thermus thermophilus.</title>
        <authorList>
            <person name="Henne A."/>
            <person name="Brueggemann H."/>
            <person name="Raasch C."/>
            <person name="Wiezer A."/>
            <person name="Hartsch T."/>
            <person name="Liesegang H."/>
            <person name="Johann A."/>
            <person name="Lienard T."/>
            <person name="Gohl O."/>
            <person name="Martinez-Arias R."/>
            <person name="Jacobi C."/>
            <person name="Starkuviene V."/>
            <person name="Schlenczeck S."/>
            <person name="Dencker S."/>
            <person name="Huber R."/>
            <person name="Klenk H.-P."/>
            <person name="Kramer W."/>
            <person name="Merkl R."/>
            <person name="Gottschalk G."/>
            <person name="Fritz H.-J."/>
        </authorList>
    </citation>
    <scope>NUCLEOTIDE SEQUENCE [LARGE SCALE GENOMIC DNA]</scope>
    <source>
        <strain>ATCC BAA-163 / DSM 7039 / HB27</strain>
    </source>
</reference>